<name>GAA1_YEAST</name>
<sequence>MALLEKLHRRIVDMGLVPRIIALLPVISMLCALFGFISIAILPMDGQYRRTYISENALMPSQAYSYFRESEWNILRGYRSQIKEMVNMTSMERNNLMGSWLQEFGTKTAIYENEQYGETLYGVMHAPRGDGTEAMVLAVPWFNSDDEFNIGGAALGVSLARFFSRWPVWSKNIIVVFSENPRAALRSWVEAYHTSLDLTGGSIEAAVVLDYSSTEDFFEYVEISYDGLNGELPNLDLVNIAISITEHEGMKVSLHGLPSDQLTNNNFWSRLKILCLGIRDWALSGVKKPHGNEAFSGWRIQSVTLKAHGNSGHDITTFGRIPEAMFRSINNLLEKFHQSFFFYLLLAPRQFVSISSYLPSAVALSIAFAISSLNAFINNAYANISLFSEYNLVALLVWFVSLVISFVVSQAFLLIPSSGLLMTISMASCFLPLILSRKIHISEPLSYRLKNVAFLYFSLVSTSLLMINFAMALLIGTLAFPMTFVKTIVESSSEHEVTTQSSNPIKTEPKDEIELVENHMDTTPATPQQQKQKLKNLVLLILTNPFISITLFGLFFDDEFHGFDIINKLVSAWLDLKCWSWFVLCIGWLPCWLLILASSFESKSVVVRSKEKQS</sequence>
<feature type="chain" id="PRO_0000087417" description="GPI transamidase component GAA1">
    <location>
        <begin position="1"/>
        <end position="614"/>
    </location>
</feature>
<feature type="topological domain" description="Cytoplasmic" evidence="1">
    <location>
        <begin position="1"/>
        <end position="19"/>
    </location>
</feature>
<feature type="transmembrane region" description="Helical" evidence="1">
    <location>
        <begin position="20"/>
        <end position="40"/>
    </location>
</feature>
<feature type="topological domain" description="Lumenal" evidence="1">
    <location>
        <begin position="41"/>
        <end position="356"/>
    </location>
</feature>
<feature type="transmembrane region" description="Helical" evidence="1">
    <location>
        <begin position="357"/>
        <end position="377"/>
    </location>
</feature>
<feature type="topological domain" description="Cytoplasmic" evidence="1">
    <location>
        <begin position="378"/>
        <end position="394"/>
    </location>
</feature>
<feature type="transmembrane region" description="Helical" evidence="1">
    <location>
        <begin position="395"/>
        <end position="415"/>
    </location>
</feature>
<feature type="topological domain" description="Lumenal" evidence="1">
    <location>
        <begin position="416"/>
        <end position="464"/>
    </location>
</feature>
<feature type="transmembrane region" description="Helical" evidence="1">
    <location>
        <begin position="465"/>
        <end position="485"/>
    </location>
</feature>
<feature type="topological domain" description="Cytoplasmic" evidence="1">
    <location>
        <begin position="486"/>
        <end position="535"/>
    </location>
</feature>
<feature type="transmembrane region" description="Helical" evidence="1">
    <location>
        <begin position="536"/>
        <end position="556"/>
    </location>
</feature>
<feature type="topological domain" description="Lumenal" evidence="1">
    <location>
        <begin position="557"/>
        <end position="577"/>
    </location>
</feature>
<feature type="transmembrane region" description="Helical" evidence="1">
    <location>
        <begin position="578"/>
        <end position="598"/>
    </location>
</feature>
<feature type="topological domain" description="Cytoplasmic" evidence="1">
    <location>
        <begin position="599"/>
        <end position="614"/>
    </location>
</feature>
<feature type="short sequence motif" description="Prevents secretion from ER" evidence="1">
    <location>
        <begin position="610"/>
        <end position="614"/>
    </location>
</feature>
<feature type="glycosylation site" description="N-linked (GlcNAc...) asparagine">
    <location>
        <position position="87"/>
    </location>
</feature>
<feature type="mutagenesis site" description="Loss of N-glycosylation." evidence="3">
    <original>N</original>
    <variation>A</variation>
    <location>
        <position position="87"/>
    </location>
</feature>
<reference key="1">
    <citation type="journal article" date="1995" name="J. Cell Biol.">
        <title>Yeast Gaa1p is required for attachment of a completed GPI anchor onto proteins.</title>
        <authorList>
            <person name="Hamburger D."/>
            <person name="Egerton M."/>
            <person name="Riezman H."/>
        </authorList>
    </citation>
    <scope>NUCLEOTIDE SEQUENCE [GENOMIC DNA]</scope>
    <scope>MUTAGENESIS OF ASN-87</scope>
</reference>
<reference key="2">
    <citation type="journal article" date="1997" name="Nature">
        <title>The nucleotide sequence of Saccharomyces cerevisiae chromosome XII.</title>
        <authorList>
            <person name="Johnston M."/>
            <person name="Hillier L.W."/>
            <person name="Riles L."/>
            <person name="Albermann K."/>
            <person name="Andre B."/>
            <person name="Ansorge W."/>
            <person name="Benes V."/>
            <person name="Brueckner M."/>
            <person name="Delius H."/>
            <person name="Dubois E."/>
            <person name="Duesterhoeft A."/>
            <person name="Entian K.-D."/>
            <person name="Floeth M."/>
            <person name="Goffeau A."/>
            <person name="Hebling U."/>
            <person name="Heumann K."/>
            <person name="Heuss-Neitzel D."/>
            <person name="Hilbert H."/>
            <person name="Hilger F."/>
            <person name="Kleine K."/>
            <person name="Koetter P."/>
            <person name="Louis E.J."/>
            <person name="Messenguy F."/>
            <person name="Mewes H.-W."/>
            <person name="Miosga T."/>
            <person name="Moestl D."/>
            <person name="Mueller-Auer S."/>
            <person name="Nentwich U."/>
            <person name="Obermaier B."/>
            <person name="Piravandi E."/>
            <person name="Pohl T.M."/>
            <person name="Portetelle D."/>
            <person name="Purnelle B."/>
            <person name="Rechmann S."/>
            <person name="Rieger M."/>
            <person name="Rinke M."/>
            <person name="Rose M."/>
            <person name="Scharfe M."/>
            <person name="Scherens B."/>
            <person name="Scholler P."/>
            <person name="Schwager C."/>
            <person name="Schwarz S."/>
            <person name="Underwood A.P."/>
            <person name="Urrestarazu L.A."/>
            <person name="Vandenbol M."/>
            <person name="Verhasselt P."/>
            <person name="Vierendeels F."/>
            <person name="Voet M."/>
            <person name="Volckaert G."/>
            <person name="Voss H."/>
            <person name="Wambutt R."/>
            <person name="Wedler E."/>
            <person name="Wedler H."/>
            <person name="Zimmermann F.K."/>
            <person name="Zollner A."/>
            <person name="Hani J."/>
            <person name="Hoheisel J.D."/>
        </authorList>
    </citation>
    <scope>NUCLEOTIDE SEQUENCE [LARGE SCALE GENOMIC DNA]</scope>
    <source>
        <strain>ATCC 204508 / S288c</strain>
    </source>
</reference>
<reference key="3">
    <citation type="journal article" date="2014" name="G3 (Bethesda)">
        <title>The reference genome sequence of Saccharomyces cerevisiae: Then and now.</title>
        <authorList>
            <person name="Engel S.R."/>
            <person name="Dietrich F.S."/>
            <person name="Fisk D.G."/>
            <person name="Binkley G."/>
            <person name="Balakrishnan R."/>
            <person name="Costanzo M.C."/>
            <person name="Dwight S.S."/>
            <person name="Hitz B.C."/>
            <person name="Karra K."/>
            <person name="Nash R.S."/>
            <person name="Weng S."/>
            <person name="Wong E.D."/>
            <person name="Lloyd P."/>
            <person name="Skrzypek M.S."/>
            <person name="Miyasato S.R."/>
            <person name="Simison M."/>
            <person name="Cherry J.M."/>
        </authorList>
    </citation>
    <scope>GENOME REANNOTATION</scope>
    <source>
        <strain>ATCC 204508 / S288c</strain>
    </source>
</reference>
<reference key="4">
    <citation type="journal article" date="2001" name="Mol. Biol. Cell">
        <title>The GPI transamidase complex of Saccharomyces cerevisiae contains Gaa1p, Gpi8p, and Gpi16p.</title>
        <authorList>
            <person name="Fraering P."/>
            <person name="Imhof I."/>
            <person name="Meyer U."/>
            <person name="Strub J.-M."/>
            <person name="van Dorsselaer A."/>
            <person name="Vionnet C."/>
            <person name="Conzelmann A."/>
        </authorList>
    </citation>
    <scope>SUBUNIT</scope>
</reference>
<reference key="5">
    <citation type="journal article" date="2006" name="Proc. Natl. Acad. Sci. U.S.A.">
        <title>A global topology map of the Saccharomyces cerevisiae membrane proteome.</title>
        <authorList>
            <person name="Kim H."/>
            <person name="Melen K."/>
            <person name="Oesterberg M."/>
            <person name="von Heijne G."/>
        </authorList>
    </citation>
    <scope>TOPOLOGY [LARGE SCALE ANALYSIS]</scope>
    <source>
        <strain>ATCC 208353 / W303-1A</strain>
    </source>
</reference>
<reference key="6">
    <citation type="journal article" date="2012" name="Proc. Natl. Acad. Sci. U.S.A.">
        <title>N-terminal acetylome analyses and functional insights of the N-terminal acetyltransferase NatB.</title>
        <authorList>
            <person name="Van Damme P."/>
            <person name="Lasa M."/>
            <person name="Polevoda B."/>
            <person name="Gazquez C."/>
            <person name="Elosegui-Artola A."/>
            <person name="Kim D.S."/>
            <person name="De Juan-Pardo E."/>
            <person name="Demeyer K."/>
            <person name="Hole K."/>
            <person name="Larrea E."/>
            <person name="Timmerman E."/>
            <person name="Prieto J."/>
            <person name="Arnesen T."/>
            <person name="Sherman F."/>
            <person name="Gevaert K."/>
            <person name="Aldabe R."/>
        </authorList>
    </citation>
    <scope>IDENTIFICATION BY MASS SPECTROMETRY [LARGE SCALE ANALYSIS]</scope>
</reference>
<protein>
    <recommendedName>
        <fullName>GPI transamidase component GAA1</fullName>
    </recommendedName>
</protein>
<keyword id="KW-0256">Endoplasmic reticulum</keyword>
<keyword id="KW-0325">Glycoprotein</keyword>
<keyword id="KW-0337">GPI-anchor biosynthesis</keyword>
<keyword id="KW-0472">Membrane</keyword>
<keyword id="KW-1185">Reference proteome</keyword>
<keyword id="KW-0812">Transmembrane</keyword>
<keyword id="KW-1133">Transmembrane helix</keyword>
<dbReference type="EMBL" id="X79409">
    <property type="protein sequence ID" value="CAA55944.1"/>
    <property type="molecule type" value="Genomic_DNA"/>
</dbReference>
<dbReference type="EMBL" id="U53880">
    <property type="protein sequence ID" value="AAB67592.1"/>
    <property type="molecule type" value="Genomic_DNA"/>
</dbReference>
<dbReference type="EMBL" id="Z73260">
    <property type="protein sequence ID" value="CAA97649.1"/>
    <property type="molecule type" value="Genomic_DNA"/>
</dbReference>
<dbReference type="EMBL" id="BK006945">
    <property type="protein sequence ID" value="DAA09404.1"/>
    <property type="molecule type" value="Genomic_DNA"/>
</dbReference>
<dbReference type="PIR" id="S45053">
    <property type="entry name" value="S45053"/>
</dbReference>
<dbReference type="RefSeq" id="NP_013189.1">
    <property type="nucleotide sequence ID" value="NM_001181975.1"/>
</dbReference>
<dbReference type="SMR" id="P39012"/>
<dbReference type="BioGRID" id="31361">
    <property type="interactions" value="212"/>
</dbReference>
<dbReference type="ComplexPortal" id="CPX-1275">
    <property type="entry name" value="GPI-anchor transamidase complex"/>
</dbReference>
<dbReference type="DIP" id="DIP-4824N"/>
<dbReference type="FunCoup" id="P39012">
    <property type="interactions" value="683"/>
</dbReference>
<dbReference type="IntAct" id="P39012">
    <property type="interactions" value="23"/>
</dbReference>
<dbReference type="MINT" id="P39012"/>
<dbReference type="STRING" id="4932.YLR088W"/>
<dbReference type="GlyCosmos" id="P39012">
    <property type="glycosylation" value="1 site, No reported glycans"/>
</dbReference>
<dbReference type="GlyGen" id="P39012">
    <property type="glycosylation" value="1 site"/>
</dbReference>
<dbReference type="PaxDb" id="4932-YLR088W"/>
<dbReference type="PeptideAtlas" id="P39012"/>
<dbReference type="EnsemblFungi" id="YLR088W_mRNA">
    <property type="protein sequence ID" value="YLR088W"/>
    <property type="gene ID" value="YLR088W"/>
</dbReference>
<dbReference type="GeneID" id="850777"/>
<dbReference type="KEGG" id="sce:YLR088W"/>
<dbReference type="AGR" id="SGD:S000004078"/>
<dbReference type="SGD" id="S000004078">
    <property type="gene designation" value="GAA1"/>
</dbReference>
<dbReference type="VEuPathDB" id="FungiDB:YLR088W"/>
<dbReference type="eggNOG" id="KOG3566">
    <property type="taxonomic scope" value="Eukaryota"/>
</dbReference>
<dbReference type="GeneTree" id="ENSGT00390000013685"/>
<dbReference type="HOGENOM" id="CLU_007442_3_1_1"/>
<dbReference type="InParanoid" id="P39012"/>
<dbReference type="OMA" id="RESEWNI"/>
<dbReference type="OrthoDB" id="445301at2759"/>
<dbReference type="BioCyc" id="YEAST:G3O-32239-MONOMER"/>
<dbReference type="UniPathway" id="UPA00196"/>
<dbReference type="BioGRID-ORCS" id="850777">
    <property type="hits" value="0 hits in 10 CRISPR screens"/>
</dbReference>
<dbReference type="PRO" id="PR:P39012"/>
<dbReference type="Proteomes" id="UP000002311">
    <property type="component" value="Chromosome XII"/>
</dbReference>
<dbReference type="RNAct" id="P39012">
    <property type="molecule type" value="protein"/>
</dbReference>
<dbReference type="GO" id="GO:0005783">
    <property type="term" value="C:endoplasmic reticulum"/>
    <property type="evidence" value="ECO:0007005"/>
    <property type="project" value="SGD"/>
</dbReference>
<dbReference type="GO" id="GO:0005789">
    <property type="term" value="C:endoplasmic reticulum membrane"/>
    <property type="evidence" value="ECO:0000303"/>
    <property type="project" value="ComplexPortal"/>
</dbReference>
<dbReference type="GO" id="GO:0042765">
    <property type="term" value="C:GPI-anchor transamidase complex"/>
    <property type="evidence" value="ECO:0000314"/>
    <property type="project" value="SGD"/>
</dbReference>
<dbReference type="GO" id="GO:0016255">
    <property type="term" value="P:attachment of GPI anchor to protein"/>
    <property type="evidence" value="ECO:0000315"/>
    <property type="project" value="UniProtKB"/>
</dbReference>
<dbReference type="GO" id="GO:0031505">
    <property type="term" value="P:fungal-type cell wall organization"/>
    <property type="evidence" value="ECO:0000303"/>
    <property type="project" value="ComplexPortal"/>
</dbReference>
<dbReference type="GO" id="GO:0006506">
    <property type="term" value="P:GPI anchor biosynthetic process"/>
    <property type="evidence" value="ECO:0007669"/>
    <property type="project" value="UniProtKB-UniPathway"/>
</dbReference>
<dbReference type="InterPro" id="IPR007246">
    <property type="entry name" value="Gaa1"/>
</dbReference>
<dbReference type="PANTHER" id="PTHR13304">
    <property type="entry name" value="GLYCOSYLPHOSPHATIDYLINOSITOL ANCHOR ATTACHMENT 1 PROTEIN"/>
    <property type="match status" value="1"/>
</dbReference>
<dbReference type="PANTHER" id="PTHR13304:SF0">
    <property type="entry name" value="GLYCOSYLPHOSPHATIDYLINOSITOL ANCHOR ATTACHMENT 1 PROTEIN"/>
    <property type="match status" value="1"/>
</dbReference>
<dbReference type="Pfam" id="PF04114">
    <property type="entry name" value="Gaa1"/>
    <property type="match status" value="1"/>
</dbReference>
<dbReference type="PIRSF" id="PIRSF036762">
    <property type="entry name" value="GAA1"/>
    <property type="match status" value="1"/>
</dbReference>
<accession>P39012</accession>
<accession>D6VY88</accession>
<organism>
    <name type="scientific">Saccharomyces cerevisiae (strain ATCC 204508 / S288c)</name>
    <name type="common">Baker's yeast</name>
    <dbReference type="NCBI Taxonomy" id="559292"/>
    <lineage>
        <taxon>Eukaryota</taxon>
        <taxon>Fungi</taxon>
        <taxon>Dikarya</taxon>
        <taxon>Ascomycota</taxon>
        <taxon>Saccharomycotina</taxon>
        <taxon>Saccharomycetes</taxon>
        <taxon>Saccharomycetales</taxon>
        <taxon>Saccharomycetaceae</taxon>
        <taxon>Saccharomyces</taxon>
    </lineage>
</organism>
<proteinExistence type="evidence at protein level"/>
<evidence type="ECO:0000255" key="1"/>
<evidence type="ECO:0000269" key="2">
    <source>
    </source>
</evidence>
<evidence type="ECO:0000269" key="3">
    <source>
    </source>
</evidence>
<comment type="function">
    <text>Component of the GPI transamidase complex. Required for a terminal step of GPI anchor attachment onto proteins. Affects endocytosis.</text>
</comment>
<comment type="pathway">
    <text>Glycolipid biosynthesis; glycosylphosphatidylinositol-anchor biosynthesis.</text>
</comment>
<comment type="subunit">
    <text evidence="2">Forms a complex with CDC91, GPI17, GPI16 and GPI8.</text>
</comment>
<comment type="interaction">
    <interactant intactId="EBI-7252">
        <id>P39012</id>
    </interactant>
    <interactant intactId="EBI-24869">
        <id>P38875</id>
        <label>GPI16</label>
    </interactant>
    <organismsDiffer>false</organismsDiffer>
    <experiments>5</experiments>
</comment>
<comment type="interaction">
    <interactant intactId="EBI-7252">
        <id>P39012</id>
    </interactant>
    <interactant intactId="EBI-7777">
        <id>Q04080</id>
        <label>GPI17</label>
    </interactant>
    <organismsDiffer>false</organismsDiffer>
    <experiments>3</experiments>
</comment>
<comment type="interaction">
    <interactant intactId="EBI-7252">
        <id>P39012</id>
    </interactant>
    <interactant intactId="EBI-7822">
        <id>P49018</id>
        <label>GPI8</label>
    </interactant>
    <organismsDiffer>false</organismsDiffer>
    <experiments>4</experiments>
</comment>
<comment type="subcellular location">
    <subcellularLocation>
        <location>Endoplasmic reticulum membrane</location>
        <topology>Multi-pass membrane protein</topology>
    </subcellularLocation>
</comment>
<gene>
    <name type="primary">GAA1</name>
    <name type="synonym">END2</name>
    <name type="ordered locus">YLR088W</name>
    <name type="ORF">L9449.4</name>
</gene>